<accession>P08153</accession>
<accession>D6VSC9</accession>
<accession>E9P945</accession>
<sequence>MDTSNSWFDASKVQSLNFDLQTNSYYSNARGSDPSSYAIEGEYKTLATDDLGNILNLNYGETNEVIMNEINDLNLPLGPLSDEKSVKVSTFSELIGNDWQSMNFDLENNSREVTLNATSLLNENRLNQDSGMTVYQKTMSDKPHDEKKISMADNLLSTINKSEINKGFDRNLGELLLQQQQELREQLRAQQEANKKLELELKQTQYKQQQLQATLENSDGPQFLSPKRKISPASENVEDVYANSLSPMISPPMSNTSFTGSPSRRNNRQKYCLQRKNSSGTVGPLCFQELNEGFNDSLISPKKIRSNPNENLSSKTKFITPFTPKSRVSSATSNSANITPNNLRLDFKINVEDQESEYSEKPLGLGIELLGKPGPSPTKSVSLKSASVDIMPTIPGSVNNTPSVNKVSLSSSYIDQYTPRGKQLHFSSISENALGINAATPHLKPPSQQARHREGVFNDLDPNVLTKNTDNEGDDNEENEPESRFVISETPSPVLKSQSKYEGRSPQFGTHIKEINTYTTNSPSKITRKLTTLPRGSIDKYVKEMPDKTFECLFPGCTKTFKRRYNIRSHIQTHLEDRPYSCDHPGCDKAFVRNHDLIRHKKSHQEKAYACPCGKKFNREDALVVHRSRMICSGGKKYENVVIKRSPRKRGRPRKDGTSSVSSSPIKENINKDHNGQLMFKLEDQLRRERSYDGNGTGIMVSPMKTNQR</sequence>
<keyword id="KW-0002">3D-structure</keyword>
<keyword id="KW-0010">Activator</keyword>
<keyword id="KW-0963">Cytoplasm</keyword>
<keyword id="KW-0238">DNA-binding</keyword>
<keyword id="KW-0479">Metal-binding</keyword>
<keyword id="KW-0539">Nucleus</keyword>
<keyword id="KW-0597">Phosphoprotein</keyword>
<keyword id="KW-1185">Reference proteome</keyword>
<keyword id="KW-0677">Repeat</keyword>
<keyword id="KW-0804">Transcription</keyword>
<keyword id="KW-0805">Transcription regulation</keyword>
<keyword id="KW-0862">Zinc</keyword>
<keyword id="KW-0863">Zinc-finger</keyword>
<organism>
    <name type="scientific">Saccharomyces cerevisiae (strain ATCC 204508 / S288c)</name>
    <name type="common">Baker's yeast</name>
    <dbReference type="NCBI Taxonomy" id="559292"/>
    <lineage>
        <taxon>Eukaryota</taxon>
        <taxon>Fungi</taxon>
        <taxon>Dikarya</taxon>
        <taxon>Ascomycota</taxon>
        <taxon>Saccharomycotina</taxon>
        <taxon>Saccharomycetes</taxon>
        <taxon>Saccharomycetales</taxon>
        <taxon>Saccharomycetaceae</taxon>
        <taxon>Saccharomyces</taxon>
    </lineage>
</organism>
<reference key="1">
    <citation type="journal article" date="1988" name="EMBO J.">
        <title>Characterization of a transcription factor involved in mother cell specific transcription of the yeast HO gene.</title>
        <authorList>
            <person name="Stillman D.J."/>
            <person name="Bankier A.T."/>
            <person name="Seddon A."/>
            <person name="Groenhout E.G."/>
            <person name="Nasmyth K.A."/>
        </authorList>
    </citation>
    <scope>NUCLEOTIDE SEQUENCE [GENOMIC DNA]</scope>
</reference>
<reference key="2">
    <citation type="journal article" date="1997" name="Nature">
        <title>The nucleotide sequence of Saccharomyces cerevisiae chromosome IV.</title>
        <authorList>
            <person name="Jacq C."/>
            <person name="Alt-Moerbe J."/>
            <person name="Andre B."/>
            <person name="Arnold W."/>
            <person name="Bahr A."/>
            <person name="Ballesta J.P.G."/>
            <person name="Bargues M."/>
            <person name="Baron L."/>
            <person name="Becker A."/>
            <person name="Biteau N."/>
            <person name="Bloecker H."/>
            <person name="Blugeon C."/>
            <person name="Boskovic J."/>
            <person name="Brandt P."/>
            <person name="Brueckner M."/>
            <person name="Buitrago M.J."/>
            <person name="Coster F."/>
            <person name="Delaveau T."/>
            <person name="del Rey F."/>
            <person name="Dujon B."/>
            <person name="Eide L.G."/>
            <person name="Garcia-Cantalejo J.M."/>
            <person name="Goffeau A."/>
            <person name="Gomez-Peris A."/>
            <person name="Granotier C."/>
            <person name="Hanemann V."/>
            <person name="Hankeln T."/>
            <person name="Hoheisel J.D."/>
            <person name="Jaeger W."/>
            <person name="Jimenez A."/>
            <person name="Jonniaux J.-L."/>
            <person name="Kraemer C."/>
            <person name="Kuester H."/>
            <person name="Laamanen P."/>
            <person name="Legros Y."/>
            <person name="Louis E.J."/>
            <person name="Moeller-Rieker S."/>
            <person name="Monnet A."/>
            <person name="Moro M."/>
            <person name="Mueller-Auer S."/>
            <person name="Nussbaumer B."/>
            <person name="Paricio N."/>
            <person name="Paulin L."/>
            <person name="Perea J."/>
            <person name="Perez-Alonso M."/>
            <person name="Perez-Ortin J.E."/>
            <person name="Pohl T.M."/>
            <person name="Prydz H."/>
            <person name="Purnelle B."/>
            <person name="Rasmussen S.W."/>
            <person name="Remacha M.A."/>
            <person name="Revuelta J.L."/>
            <person name="Rieger M."/>
            <person name="Salom D."/>
            <person name="Saluz H.P."/>
            <person name="Saiz J.E."/>
            <person name="Saren A.-M."/>
            <person name="Schaefer M."/>
            <person name="Scharfe M."/>
            <person name="Schmidt E.R."/>
            <person name="Schneider C."/>
            <person name="Scholler P."/>
            <person name="Schwarz S."/>
            <person name="Soler-Mira A."/>
            <person name="Urrestarazu L.A."/>
            <person name="Verhasselt P."/>
            <person name="Vissers S."/>
            <person name="Voet M."/>
            <person name="Volckaert G."/>
            <person name="Wagner G."/>
            <person name="Wambutt R."/>
            <person name="Wedler E."/>
            <person name="Wedler H."/>
            <person name="Woelfl S."/>
            <person name="Harris D.E."/>
            <person name="Bowman S."/>
            <person name="Brown D."/>
            <person name="Churcher C.M."/>
            <person name="Connor R."/>
            <person name="Dedman K."/>
            <person name="Gentles S."/>
            <person name="Hamlin N."/>
            <person name="Hunt S."/>
            <person name="Jones L."/>
            <person name="McDonald S."/>
            <person name="Murphy L.D."/>
            <person name="Niblett D."/>
            <person name="Odell C."/>
            <person name="Oliver K."/>
            <person name="Rajandream M.A."/>
            <person name="Richards C."/>
            <person name="Shore L."/>
            <person name="Walsh S.V."/>
            <person name="Barrell B.G."/>
            <person name="Dietrich F.S."/>
            <person name="Mulligan J.T."/>
            <person name="Allen E."/>
            <person name="Araujo R."/>
            <person name="Aviles E."/>
            <person name="Berno A."/>
            <person name="Carpenter J."/>
            <person name="Chen E."/>
            <person name="Cherry J.M."/>
            <person name="Chung E."/>
            <person name="Duncan M."/>
            <person name="Hunicke-Smith S."/>
            <person name="Hyman R.W."/>
            <person name="Komp C."/>
            <person name="Lashkari D."/>
            <person name="Lew H."/>
            <person name="Lin D."/>
            <person name="Mosedale D."/>
            <person name="Nakahara K."/>
            <person name="Namath A."/>
            <person name="Oefner P."/>
            <person name="Oh C."/>
            <person name="Petel F.X."/>
            <person name="Roberts D."/>
            <person name="Schramm S."/>
            <person name="Schroeder M."/>
            <person name="Shogren T."/>
            <person name="Shroff N."/>
            <person name="Winant A."/>
            <person name="Yelton M.A."/>
            <person name="Botstein D."/>
            <person name="Davis R.W."/>
            <person name="Johnston M."/>
            <person name="Andrews S."/>
            <person name="Brinkman R."/>
            <person name="Cooper J."/>
            <person name="Ding H."/>
            <person name="Du Z."/>
            <person name="Favello A."/>
            <person name="Fulton L."/>
            <person name="Gattung S."/>
            <person name="Greco T."/>
            <person name="Hallsworth K."/>
            <person name="Hawkins J."/>
            <person name="Hillier L.W."/>
            <person name="Jier M."/>
            <person name="Johnson D."/>
            <person name="Johnston L."/>
            <person name="Kirsten J."/>
            <person name="Kucaba T."/>
            <person name="Langston Y."/>
            <person name="Latreille P."/>
            <person name="Le T."/>
            <person name="Mardis E."/>
            <person name="Menezes S."/>
            <person name="Miller N."/>
            <person name="Nhan M."/>
            <person name="Pauley A."/>
            <person name="Peluso D."/>
            <person name="Rifkin L."/>
            <person name="Riles L."/>
            <person name="Taich A."/>
            <person name="Trevaskis E."/>
            <person name="Vignati D."/>
            <person name="Wilcox L."/>
            <person name="Wohldman P."/>
            <person name="Vaudin M."/>
            <person name="Wilson R."/>
            <person name="Waterston R."/>
            <person name="Albermann K."/>
            <person name="Hani J."/>
            <person name="Heumann K."/>
            <person name="Kleine K."/>
            <person name="Mewes H.-W."/>
            <person name="Zollner A."/>
            <person name="Zaccaria P."/>
        </authorList>
    </citation>
    <scope>NUCLEOTIDE SEQUENCE [LARGE SCALE GENOMIC DNA]</scope>
    <source>
        <strain>ATCC 204508 / S288c</strain>
    </source>
</reference>
<reference key="3">
    <citation type="journal article" date="2014" name="G3 (Bethesda)">
        <title>The reference genome sequence of Saccharomyces cerevisiae: Then and now.</title>
        <authorList>
            <person name="Engel S.R."/>
            <person name="Dietrich F.S."/>
            <person name="Fisk D.G."/>
            <person name="Binkley G."/>
            <person name="Balakrishnan R."/>
            <person name="Costanzo M.C."/>
            <person name="Dwight S.S."/>
            <person name="Hitz B.C."/>
            <person name="Karra K."/>
            <person name="Nash R.S."/>
            <person name="Weng S."/>
            <person name="Wong E.D."/>
            <person name="Lloyd P."/>
            <person name="Skrzypek M.S."/>
            <person name="Miyasato S.R."/>
            <person name="Simison M."/>
            <person name="Cherry J.M."/>
        </authorList>
    </citation>
    <scope>GENOME REANNOTATION</scope>
    <source>
        <strain>ATCC 204508 / S288c</strain>
    </source>
</reference>
<reference key="4">
    <citation type="journal article" date="2007" name="Genome Res.">
        <title>Approaching a complete repository of sequence-verified protein-encoding clones for Saccharomyces cerevisiae.</title>
        <authorList>
            <person name="Hu Y."/>
            <person name="Rolfs A."/>
            <person name="Bhullar B."/>
            <person name="Murthy T.V.S."/>
            <person name="Zhu C."/>
            <person name="Berger M.F."/>
            <person name="Camargo A.A."/>
            <person name="Kelley F."/>
            <person name="McCarron S."/>
            <person name="Jepson D."/>
            <person name="Richardson A."/>
            <person name="Raphael J."/>
            <person name="Moreira D."/>
            <person name="Taycher E."/>
            <person name="Zuo D."/>
            <person name="Mohr S."/>
            <person name="Kane M.F."/>
            <person name="Williamson J."/>
            <person name="Simpson A.J.G."/>
            <person name="Bulyk M.L."/>
            <person name="Harlow E."/>
            <person name="Marsischky G."/>
            <person name="Kolodner R.D."/>
            <person name="LaBaer J."/>
        </authorList>
    </citation>
    <scope>NUCLEOTIDE SEQUENCE [GENOMIC DNA]</scope>
    <source>
        <strain>ATCC 204508 / S288c</strain>
    </source>
</reference>
<reference key="5">
    <citation type="journal article" date="1988" name="Nature">
        <title>Zinc-finger motifs expressed in E. coli and folded in vitro direct specific binding to DNA.</title>
        <authorList>
            <person name="Nagai K."/>
            <person name="Nakaseko Y."/>
            <person name="Nasmyth K.A."/>
            <person name="Rhodes D."/>
        </authorList>
    </citation>
    <scope>DNA-BINDING</scope>
</reference>
<reference key="6">
    <citation type="journal article" date="1991" name="Cell">
        <title>The role of phosphorylation and the CDC28 protein kinase in cell cycle-regulated nuclear import of the S. cerevisiae transcription factor SWI5.</title>
        <authorList>
            <person name="Moll T."/>
            <person name="Tebb G."/>
            <person name="Surana U."/>
            <person name="Robitsch H."/>
            <person name="Nasmyth K."/>
        </authorList>
    </citation>
    <scope>PHOSPHORYLATION AT SER-522; SER-646 AND SER-664 BY CDC28</scope>
    <scope>MUTAGENESIS</scope>
    <scope>SUBCELLULAR LOCATION</scope>
</reference>
<reference key="7">
    <citation type="journal article" date="2000" name="Mol. Microbiol.">
        <title>Interactions between Pho85 cyclin-dependent kinase complexes and the Swi5 transcription factor in budding yeast.</title>
        <authorList>
            <person name="Measday V."/>
            <person name="McBride H."/>
            <person name="Moffat J."/>
            <person name="Stillman D."/>
            <person name="Andrews B.J."/>
        </authorList>
    </citation>
    <scope>PHOSPHORYLATION BY PHO85</scope>
</reference>
<reference key="8">
    <citation type="journal article" date="2003" name="Nature">
        <title>Global analysis of protein expression in yeast.</title>
        <authorList>
            <person name="Ghaemmaghami S."/>
            <person name="Huh W.-K."/>
            <person name="Bower K."/>
            <person name="Howson R.W."/>
            <person name="Belle A."/>
            <person name="Dephoure N."/>
            <person name="O'Shea E.K."/>
            <person name="Weissman J.S."/>
        </authorList>
    </citation>
    <scope>LEVEL OF PROTEIN EXPRESSION [LARGE SCALE ANALYSIS]</scope>
</reference>
<reference key="9">
    <citation type="journal article" date="2007" name="Proc. Natl. Acad. Sci. U.S.A.">
        <title>Analysis of phosphorylation sites on proteins from Saccharomyces cerevisiae by electron transfer dissociation (ETD) mass spectrometry.</title>
        <authorList>
            <person name="Chi A."/>
            <person name="Huttenhower C."/>
            <person name="Geer L.Y."/>
            <person name="Coon J.J."/>
            <person name="Syka J.E.P."/>
            <person name="Bai D.L."/>
            <person name="Shabanowitz J."/>
            <person name="Burke D.J."/>
            <person name="Troyanskaya O.G."/>
            <person name="Hunt D.F."/>
        </authorList>
    </citation>
    <scope>PHOSPHORYLATION [LARGE SCALE ANALYSIS] AT SER-505 AND SER-646</scope>
    <scope>IDENTIFICATION BY MASS SPECTROMETRY [LARGE SCALE ANALYSIS]</scope>
</reference>
<reference key="10">
    <citation type="journal article" date="2008" name="Mol. Cell. Proteomics">
        <title>A multidimensional chromatography technology for in-depth phosphoproteome analysis.</title>
        <authorList>
            <person name="Albuquerque C.P."/>
            <person name="Smolka M.B."/>
            <person name="Payne S.H."/>
            <person name="Bafna V."/>
            <person name="Eng J."/>
            <person name="Zhou H."/>
        </authorList>
    </citation>
    <scope>PHOSPHORYLATION [LARGE SCALE ANALYSIS] AT SER-492 AND SER-505</scope>
    <scope>IDENTIFICATION BY MASS SPECTROMETRY [LARGE SCALE ANALYSIS]</scope>
</reference>
<reference key="11">
    <citation type="journal article" date="2009" name="Science">
        <title>Global analysis of Cdk1 substrate phosphorylation sites provides insights into evolution.</title>
        <authorList>
            <person name="Holt L.J."/>
            <person name="Tuch B.B."/>
            <person name="Villen J."/>
            <person name="Johnson A.D."/>
            <person name="Gygi S.P."/>
            <person name="Morgan D.O."/>
        </authorList>
    </citation>
    <scope>PHOSPHORYLATION [LARGE SCALE ANALYSIS] AT SER-225; SER-278; SER-300; THR-339; SER-376; SER-488; SER-492 AND SER-522</scope>
    <scope>IDENTIFICATION BY MASS SPECTROMETRY [LARGE SCALE ANALYSIS]</scope>
</reference>
<reference key="12">
    <citation type="journal article" date="1992" name="J. Mol. Biol.">
        <title>Solution structures of two zinc-finger domains from SWI5 obtained using two-dimensional 1H nuclear magnetic resonance spectroscopy. A zinc-finger structure with a third strand of beta-sheet.</title>
        <authorList>
            <person name="Neuhaus D."/>
            <person name="Nakaseko Y."/>
            <person name="Schwabe J.W.R."/>
            <person name="Klug A."/>
        </authorList>
    </citation>
    <scope>STRUCTURE BY NMR OF 540-608</scope>
</reference>
<comment type="function">
    <text>Determines the mother-cell-specific transcription of the HO endonuclease gene that is responsible for the initiation of mating-type switching in yeast. Recognizes a specific sequence in the promoter of the HO gene. Activates EGT2 transcription in a concentration-dependent manner. Synthesized during G2 and early mitosis.</text>
</comment>
<comment type="subcellular location">
    <subcellularLocation>
        <location evidence="5">Nucleus</location>
    </subcellularLocation>
    <subcellularLocation>
        <location evidence="5">Cytoplasm</location>
    </subcellularLocation>
    <text>Nuclear in G1, cytoplasmic in S, G2 and M cell cycle phases.</text>
</comment>
<comment type="PTM">
    <text>Cell cycle-dependent phosphorylation of three serine residues prevents SWI5 from entering the nucleus, and it accumulates in the cytoplasm. As a consequence of CDC28 kinase inactivation at the end of anaphase, the three serine residues are dephosphorylated and SWI5 enters the nucleus to activate transcription. It is then rapidly degraded. Threonine phosphorylation also seems to occur.</text>
</comment>
<comment type="PTM">
    <text>Phosphorylated by PHO85.</text>
</comment>
<comment type="miscellaneous">
    <text evidence="4">Present with 688 molecules/cell in log phase SD medium.</text>
</comment>
<proteinExistence type="evidence at protein level"/>
<protein>
    <recommendedName>
        <fullName>Transcriptional factor SWI5</fullName>
    </recommendedName>
</protein>
<dbReference type="EMBL" id="X06978">
    <property type="protein sequence ID" value="CAA30040.1"/>
    <property type="molecule type" value="Genomic_DNA"/>
</dbReference>
<dbReference type="EMBL" id="Z50046">
    <property type="protein sequence ID" value="CAA90369.1"/>
    <property type="molecule type" value="Genomic_DNA"/>
</dbReference>
<dbReference type="EMBL" id="AY723778">
    <property type="protein sequence ID" value="AAU09695.1"/>
    <property type="molecule type" value="Genomic_DNA"/>
</dbReference>
<dbReference type="EMBL" id="BK006938">
    <property type="protein sequence ID" value="DAA11989.1"/>
    <property type="molecule type" value="Genomic_DNA"/>
</dbReference>
<dbReference type="PIR" id="S00342">
    <property type="entry name" value="TWBYS5"/>
</dbReference>
<dbReference type="RefSeq" id="NP_010430.1">
    <property type="nucleotide sequence ID" value="NM_001180453.1"/>
</dbReference>
<dbReference type="PDB" id="1NCS">
    <property type="method" value="NMR"/>
    <property type="chains" value="A=532-578"/>
</dbReference>
<dbReference type="PDB" id="1ZFD">
    <property type="method" value="NMR"/>
    <property type="chains" value="A=577-608"/>
</dbReference>
<dbReference type="PDBsum" id="1NCS"/>
<dbReference type="PDBsum" id="1ZFD"/>
<dbReference type="BMRB" id="P08153"/>
<dbReference type="SMR" id="P08153"/>
<dbReference type="BioGRID" id="32200">
    <property type="interactions" value="431"/>
</dbReference>
<dbReference type="DIP" id="DIP-1461N"/>
<dbReference type="ELM" id="P08153"/>
<dbReference type="FunCoup" id="P08153">
    <property type="interactions" value="766"/>
</dbReference>
<dbReference type="IntAct" id="P08153">
    <property type="interactions" value="20"/>
</dbReference>
<dbReference type="MINT" id="P08153"/>
<dbReference type="STRING" id="4932.YDR146C"/>
<dbReference type="iPTMnet" id="P08153"/>
<dbReference type="PaxDb" id="4932-YDR146C"/>
<dbReference type="PeptideAtlas" id="P08153"/>
<dbReference type="EnsemblFungi" id="YDR146C_mRNA">
    <property type="protein sequence ID" value="YDR146C"/>
    <property type="gene ID" value="YDR146C"/>
</dbReference>
<dbReference type="GeneID" id="851724"/>
<dbReference type="KEGG" id="sce:YDR146C"/>
<dbReference type="AGR" id="SGD:S000002553"/>
<dbReference type="SGD" id="S000002553">
    <property type="gene designation" value="SWI5"/>
</dbReference>
<dbReference type="VEuPathDB" id="FungiDB:YDR146C"/>
<dbReference type="eggNOG" id="KOG1721">
    <property type="taxonomic scope" value="Eukaryota"/>
</dbReference>
<dbReference type="GeneTree" id="ENSGT00940000176710"/>
<dbReference type="HOGENOM" id="CLU_021006_0_0_1"/>
<dbReference type="InParanoid" id="P08153"/>
<dbReference type="OMA" id="GQIVFKM"/>
<dbReference type="OrthoDB" id="3437960at2759"/>
<dbReference type="BioCyc" id="YEAST:G3O-29743-MONOMER"/>
<dbReference type="BioGRID-ORCS" id="851724">
    <property type="hits" value="0 hits in 13 CRISPR screens"/>
</dbReference>
<dbReference type="EvolutionaryTrace" id="P08153"/>
<dbReference type="PRO" id="PR:P08153"/>
<dbReference type="Proteomes" id="UP000002311">
    <property type="component" value="Chromosome IV"/>
</dbReference>
<dbReference type="RNAct" id="P08153">
    <property type="molecule type" value="protein"/>
</dbReference>
<dbReference type="GO" id="GO:0005737">
    <property type="term" value="C:cytoplasm"/>
    <property type="evidence" value="ECO:0000314"/>
    <property type="project" value="SGD"/>
</dbReference>
<dbReference type="GO" id="GO:0005634">
    <property type="term" value="C:nucleus"/>
    <property type="evidence" value="ECO:0000314"/>
    <property type="project" value="SGD"/>
</dbReference>
<dbReference type="GO" id="GO:0000981">
    <property type="term" value="F:DNA-binding transcription factor activity, RNA polymerase II-specific"/>
    <property type="evidence" value="ECO:0000315"/>
    <property type="project" value="SGD"/>
</dbReference>
<dbReference type="GO" id="GO:0036033">
    <property type="term" value="F:mediator complex binding"/>
    <property type="evidence" value="ECO:0000315"/>
    <property type="project" value="SGD"/>
</dbReference>
<dbReference type="GO" id="GO:0000978">
    <property type="term" value="F:RNA polymerase II cis-regulatory region sequence-specific DNA binding"/>
    <property type="evidence" value="ECO:0000318"/>
    <property type="project" value="GO_Central"/>
</dbReference>
<dbReference type="GO" id="GO:0000977">
    <property type="term" value="F:RNA polymerase II transcription regulatory region sequence-specific DNA binding"/>
    <property type="evidence" value="ECO:0000314"/>
    <property type="project" value="SGD"/>
</dbReference>
<dbReference type="GO" id="GO:0043565">
    <property type="term" value="F:sequence-specific DNA binding"/>
    <property type="evidence" value="ECO:0007005"/>
    <property type="project" value="SGD"/>
</dbReference>
<dbReference type="GO" id="GO:0008270">
    <property type="term" value="F:zinc ion binding"/>
    <property type="evidence" value="ECO:0007669"/>
    <property type="project" value="UniProtKB-KW"/>
</dbReference>
<dbReference type="GO" id="GO:0010458">
    <property type="term" value="P:exit from mitosis"/>
    <property type="evidence" value="ECO:0000315"/>
    <property type="project" value="SGD"/>
</dbReference>
<dbReference type="GO" id="GO:0000082">
    <property type="term" value="P:G1/S transition of mitotic cell cycle"/>
    <property type="evidence" value="ECO:0000315"/>
    <property type="project" value="SGD"/>
</dbReference>
<dbReference type="GO" id="GO:0031496">
    <property type="term" value="P:positive regulation of mating type switching"/>
    <property type="evidence" value="ECO:0000315"/>
    <property type="project" value="SGD"/>
</dbReference>
<dbReference type="GO" id="GO:0045944">
    <property type="term" value="P:positive regulation of transcription by RNA polymerase II"/>
    <property type="evidence" value="ECO:0000315"/>
    <property type="project" value="SGD"/>
</dbReference>
<dbReference type="GO" id="GO:0006357">
    <property type="term" value="P:regulation of transcription by RNA polymerase II"/>
    <property type="evidence" value="ECO:0000315"/>
    <property type="project" value="SGD"/>
</dbReference>
<dbReference type="FunFam" id="3.30.160.60:FF:002021">
    <property type="entry name" value="Transcription factor"/>
    <property type="match status" value="1"/>
</dbReference>
<dbReference type="FunFam" id="3.30.160.60:FF:001752">
    <property type="entry name" value="Transcriptional factor SWI5"/>
    <property type="match status" value="1"/>
</dbReference>
<dbReference type="Gene3D" id="3.30.160.60">
    <property type="entry name" value="Classic Zinc Finger"/>
    <property type="match status" value="2"/>
</dbReference>
<dbReference type="InterPro" id="IPR050329">
    <property type="entry name" value="GLI_C2H2-zinc-finger"/>
</dbReference>
<dbReference type="InterPro" id="IPR036236">
    <property type="entry name" value="Znf_C2H2_sf"/>
</dbReference>
<dbReference type="InterPro" id="IPR013087">
    <property type="entry name" value="Znf_C2H2_type"/>
</dbReference>
<dbReference type="PANTHER" id="PTHR19818:SF144">
    <property type="entry name" value="METALLOTHIONEIN EXPRESSION ACTIVATOR-RELATED"/>
    <property type="match status" value="1"/>
</dbReference>
<dbReference type="PANTHER" id="PTHR19818">
    <property type="entry name" value="ZINC FINGER PROTEIN ZIC AND GLI"/>
    <property type="match status" value="1"/>
</dbReference>
<dbReference type="Pfam" id="PF00096">
    <property type="entry name" value="zf-C2H2"/>
    <property type="match status" value="2"/>
</dbReference>
<dbReference type="SMART" id="SM00355">
    <property type="entry name" value="ZnF_C2H2"/>
    <property type="match status" value="2"/>
</dbReference>
<dbReference type="SUPFAM" id="SSF57667">
    <property type="entry name" value="beta-beta-alpha zinc fingers"/>
    <property type="match status" value="1"/>
</dbReference>
<dbReference type="PROSITE" id="PS00028">
    <property type="entry name" value="ZINC_FINGER_C2H2_1"/>
    <property type="match status" value="2"/>
</dbReference>
<dbReference type="PROSITE" id="PS50157">
    <property type="entry name" value="ZINC_FINGER_C2H2_2"/>
    <property type="match status" value="2"/>
</dbReference>
<feature type="chain" id="PRO_0000046855" description="Transcriptional factor SWI5">
    <location>
        <begin position="1"/>
        <end position="709"/>
    </location>
</feature>
<feature type="zinc finger region" description="C2H2-type 1" evidence="2">
    <location>
        <begin position="550"/>
        <end position="574"/>
    </location>
</feature>
<feature type="zinc finger region" description="C2H2-type 2" evidence="2">
    <location>
        <begin position="580"/>
        <end position="604"/>
    </location>
</feature>
<feature type="zinc finger region" description="C2H2-type 3" evidence="2">
    <location>
        <begin position="609"/>
        <end position="632"/>
    </location>
</feature>
<feature type="DNA-binding region" description="A.T hook">
    <location>
        <begin position="647"/>
        <end position="659"/>
    </location>
</feature>
<feature type="region of interest" description="Disordered" evidence="3">
    <location>
        <begin position="245"/>
        <end position="267"/>
    </location>
</feature>
<feature type="region of interest" description="Disordered" evidence="3">
    <location>
        <begin position="443"/>
        <end position="483"/>
    </location>
</feature>
<feature type="region of interest" description="Disordered" evidence="3">
    <location>
        <begin position="644"/>
        <end position="677"/>
    </location>
</feature>
<feature type="short sequence motif" description="Nuclear localization signal" evidence="1">
    <location>
        <begin position="635"/>
        <end position="659"/>
    </location>
</feature>
<feature type="compositionally biased region" description="Polar residues" evidence="3">
    <location>
        <begin position="245"/>
        <end position="264"/>
    </location>
</feature>
<feature type="compositionally biased region" description="Acidic residues" evidence="3">
    <location>
        <begin position="471"/>
        <end position="480"/>
    </location>
</feature>
<feature type="modified residue" description="Phosphoserine" evidence="9">
    <location>
        <position position="225"/>
    </location>
</feature>
<feature type="modified residue" description="Phosphoserine" evidence="9">
    <location>
        <position position="278"/>
    </location>
</feature>
<feature type="modified residue" description="Phosphoserine" evidence="9">
    <location>
        <position position="300"/>
    </location>
</feature>
<feature type="modified residue" description="Phosphothreonine" evidence="9">
    <location>
        <position position="339"/>
    </location>
</feature>
<feature type="modified residue" description="Phosphoserine" evidence="9">
    <location>
        <position position="376"/>
    </location>
</feature>
<feature type="modified residue" description="Phosphoserine" evidence="9">
    <location>
        <position position="488"/>
    </location>
</feature>
<feature type="modified residue" description="Phosphoserine" evidence="8 9">
    <location>
        <position position="492"/>
    </location>
</feature>
<feature type="modified residue" description="Phosphoserine" evidence="7 8">
    <location>
        <position position="505"/>
    </location>
</feature>
<feature type="modified residue" description="Phosphoserine; by CDC28" evidence="5 9">
    <location>
        <position position="522"/>
    </location>
</feature>
<feature type="modified residue" description="Phosphoserine; by CDC28" evidence="5 7">
    <location>
        <position position="646"/>
    </location>
</feature>
<feature type="modified residue" description="Phosphoserine; by CDC28" evidence="5">
    <location>
        <position position="664"/>
    </location>
</feature>
<feature type="mutagenesis site" description="Constitutive nuclear entry; when associated with A-646 and A-664." evidence="5">
    <original>S</original>
    <variation>A</variation>
    <location>
        <position position="522"/>
    </location>
</feature>
<feature type="mutagenesis site" description="Constitutive nuclear entry; when associated with A-522 and A-664." evidence="5">
    <original>S</original>
    <variation>A</variation>
    <location>
        <position position="646"/>
    </location>
</feature>
<feature type="mutagenesis site" description="Constitutive nuclear entry; when associated with A-522 and A-646." evidence="5">
    <original>S</original>
    <variation>A</variation>
    <location>
        <position position="664"/>
    </location>
</feature>
<feature type="sequence conflict" description="In Ref. 4; AAU09695." evidence="6" ref="4">
    <original>E</original>
    <variation>K</variation>
    <location>
        <position position="514"/>
    </location>
</feature>
<feature type="helix" evidence="10">
    <location>
        <begin position="538"/>
        <end position="540"/>
    </location>
</feature>
<feature type="strand" evidence="10">
    <location>
        <begin position="543"/>
        <end position="545"/>
    </location>
</feature>
<feature type="turn" evidence="10">
    <location>
        <begin position="546"/>
        <end position="548"/>
    </location>
</feature>
<feature type="strand" evidence="10">
    <location>
        <begin position="549"/>
        <end position="551"/>
    </location>
</feature>
<feature type="strand" evidence="10">
    <location>
        <begin position="563"/>
        <end position="566"/>
    </location>
</feature>
<feature type="helix" evidence="10">
    <location>
        <begin position="567"/>
        <end position="574"/>
    </location>
</feature>
<feature type="turn" evidence="10">
    <location>
        <begin position="575"/>
        <end position="577"/>
    </location>
</feature>
<feature type="strand" evidence="11">
    <location>
        <begin position="591"/>
        <end position="594"/>
    </location>
</feature>
<feature type="helix" evidence="11">
    <location>
        <begin position="595"/>
        <end position="601"/>
    </location>
</feature>
<feature type="helix" evidence="11">
    <location>
        <begin position="602"/>
        <end position="604"/>
    </location>
</feature>
<gene>
    <name type="primary">SWI5</name>
    <name type="ordered locus">YDR146C</name>
    <name type="ORF">YD8358.03C</name>
</gene>
<name>SWI5_YEAST</name>
<evidence type="ECO:0000255" key="1"/>
<evidence type="ECO:0000255" key="2">
    <source>
        <dbReference type="PROSITE-ProRule" id="PRU00042"/>
    </source>
</evidence>
<evidence type="ECO:0000256" key="3">
    <source>
        <dbReference type="SAM" id="MobiDB-lite"/>
    </source>
</evidence>
<evidence type="ECO:0000269" key="4">
    <source>
    </source>
</evidence>
<evidence type="ECO:0000269" key="5">
    <source>
    </source>
</evidence>
<evidence type="ECO:0000305" key="6"/>
<evidence type="ECO:0007744" key="7">
    <source>
    </source>
</evidence>
<evidence type="ECO:0007744" key="8">
    <source>
    </source>
</evidence>
<evidence type="ECO:0007744" key="9">
    <source>
    </source>
</evidence>
<evidence type="ECO:0007829" key="10">
    <source>
        <dbReference type="PDB" id="1NCS"/>
    </source>
</evidence>
<evidence type="ECO:0007829" key="11">
    <source>
        <dbReference type="PDB" id="1ZFD"/>
    </source>
</evidence>